<accession>Q9R1P3</accession>
<protein>
    <recommendedName>
        <fullName>Proteasome subunit beta type-2</fullName>
    </recommendedName>
    <alternativeName>
        <fullName>Macropain subunit C7-I</fullName>
    </alternativeName>
    <alternativeName>
        <fullName>Multicatalytic endopeptidase complex subunit C7-I</fullName>
    </alternativeName>
    <alternativeName>
        <fullName>Proteasome component C7-I</fullName>
    </alternativeName>
    <alternativeName>
        <fullName>Proteasome subunit beta-4</fullName>
        <shortName>beta-4</shortName>
    </alternativeName>
</protein>
<keyword id="KW-0002">3D-structure</keyword>
<keyword id="KW-0007">Acetylation</keyword>
<keyword id="KW-0963">Cytoplasm</keyword>
<keyword id="KW-0903">Direct protein sequencing</keyword>
<keyword id="KW-0539">Nucleus</keyword>
<keyword id="KW-0647">Proteasome</keyword>
<keyword id="KW-1185">Reference proteome</keyword>
<gene>
    <name type="primary">Psmb2</name>
</gene>
<dbReference type="EMBL" id="AF060090">
    <property type="protein sequence ID" value="AAD50535.1"/>
    <property type="molecule type" value="mRNA"/>
</dbReference>
<dbReference type="EMBL" id="BC008265">
    <property type="protein sequence ID" value="AAH08265.1"/>
    <property type="molecule type" value="mRNA"/>
</dbReference>
<dbReference type="CCDS" id="CCDS18657.1"/>
<dbReference type="RefSeq" id="NP_036100.3">
    <property type="nucleotide sequence ID" value="NM_011970.4"/>
</dbReference>
<dbReference type="PDB" id="3UNB">
    <property type="method" value="X-ray"/>
    <property type="resolution" value="2.90 A"/>
    <property type="chains" value="J/X/l/z=1-201"/>
</dbReference>
<dbReference type="PDB" id="3UNE">
    <property type="method" value="X-ray"/>
    <property type="resolution" value="3.20 A"/>
    <property type="chains" value="J/X/l/z=1-201"/>
</dbReference>
<dbReference type="PDB" id="3UNF">
    <property type="method" value="X-ray"/>
    <property type="resolution" value="2.90 A"/>
    <property type="chains" value="J/X=1-201"/>
</dbReference>
<dbReference type="PDB" id="3UNH">
    <property type="method" value="X-ray"/>
    <property type="resolution" value="3.20 A"/>
    <property type="chains" value="J/X=1-201"/>
</dbReference>
<dbReference type="PDB" id="8YPK">
    <property type="method" value="EM"/>
    <property type="resolution" value="2.70 A"/>
    <property type="chains" value="T/V=1-201"/>
</dbReference>
<dbReference type="PDB" id="8YVP">
    <property type="method" value="EM"/>
    <property type="resolution" value="2.50 A"/>
    <property type="chains" value="T/V=1-201"/>
</dbReference>
<dbReference type="PDBsum" id="3UNB"/>
<dbReference type="PDBsum" id="3UNE"/>
<dbReference type="PDBsum" id="3UNF"/>
<dbReference type="PDBsum" id="3UNH"/>
<dbReference type="PDBsum" id="8YPK"/>
<dbReference type="PDBsum" id="8YVP"/>
<dbReference type="EMDB" id="EMD-39482"/>
<dbReference type="EMDB" id="EMD-39612"/>
<dbReference type="SMR" id="Q9R1P3"/>
<dbReference type="BioGRID" id="204996">
    <property type="interactions" value="48"/>
</dbReference>
<dbReference type="CORUM" id="Q9R1P3"/>
<dbReference type="FunCoup" id="Q9R1P3">
    <property type="interactions" value="1772"/>
</dbReference>
<dbReference type="IntAct" id="Q9R1P3">
    <property type="interactions" value="6"/>
</dbReference>
<dbReference type="STRING" id="10090.ENSMUSP00000030642"/>
<dbReference type="BindingDB" id="Q9R1P3"/>
<dbReference type="ChEMBL" id="CHEMBL3112378"/>
<dbReference type="MEROPS" id="T01.984"/>
<dbReference type="GlyGen" id="Q9R1P3">
    <property type="glycosylation" value="1 site, 1 O-linked glycan (1 site)"/>
</dbReference>
<dbReference type="iPTMnet" id="Q9R1P3"/>
<dbReference type="PhosphoSitePlus" id="Q9R1P3"/>
<dbReference type="SwissPalm" id="Q9R1P3"/>
<dbReference type="REPRODUCTION-2DPAGE" id="Q9R1P3"/>
<dbReference type="jPOST" id="Q9R1P3"/>
<dbReference type="PaxDb" id="10090-ENSMUSP00000030642"/>
<dbReference type="PeptideAtlas" id="Q9R1P3"/>
<dbReference type="ProteomicsDB" id="291691"/>
<dbReference type="Pumba" id="Q9R1P3"/>
<dbReference type="TopDownProteomics" id="Q9R1P3"/>
<dbReference type="Antibodypedia" id="17325">
    <property type="antibodies" value="266 antibodies from 33 providers"/>
</dbReference>
<dbReference type="DNASU" id="26445"/>
<dbReference type="Ensembl" id="ENSMUST00000030642.3">
    <property type="protein sequence ID" value="ENSMUSP00000030642.3"/>
    <property type="gene ID" value="ENSMUSG00000028837.9"/>
</dbReference>
<dbReference type="GeneID" id="26445"/>
<dbReference type="KEGG" id="mmu:26445"/>
<dbReference type="UCSC" id="uc008utr.2">
    <property type="organism name" value="mouse"/>
</dbReference>
<dbReference type="AGR" id="MGI:1347045"/>
<dbReference type="CTD" id="5690"/>
<dbReference type="MGI" id="MGI:1347045">
    <property type="gene designation" value="Psmb2"/>
</dbReference>
<dbReference type="VEuPathDB" id="HostDB:ENSMUSG00000028837"/>
<dbReference type="eggNOG" id="KOG0177">
    <property type="taxonomic scope" value="Eukaryota"/>
</dbReference>
<dbReference type="GeneTree" id="ENSGT00640000091536"/>
<dbReference type="HOGENOM" id="CLU_035750_12_1_1"/>
<dbReference type="InParanoid" id="Q9R1P3"/>
<dbReference type="OMA" id="MKRDHDK"/>
<dbReference type="OrthoDB" id="268428at2759"/>
<dbReference type="PhylomeDB" id="Q9R1P3"/>
<dbReference type="TreeFam" id="TF106219"/>
<dbReference type="Reactome" id="R-MMU-1169091">
    <property type="pathway name" value="Activation of NF-kappaB in B cells"/>
</dbReference>
<dbReference type="Reactome" id="R-MMU-1234176">
    <property type="pathway name" value="Oxygen-dependent proline hydroxylation of Hypoxia-inducible Factor Alpha"/>
</dbReference>
<dbReference type="Reactome" id="R-MMU-1236978">
    <property type="pathway name" value="Cross-presentation of soluble exogenous antigens (endosomes)"/>
</dbReference>
<dbReference type="Reactome" id="R-MMU-174084">
    <property type="pathway name" value="Autodegradation of Cdh1 by Cdh1:APC/C"/>
</dbReference>
<dbReference type="Reactome" id="R-MMU-174154">
    <property type="pathway name" value="APC/C:Cdc20 mediated degradation of Securin"/>
</dbReference>
<dbReference type="Reactome" id="R-MMU-174178">
    <property type="pathway name" value="APC/C:Cdh1 mediated degradation of Cdc20 and other APC/C:Cdh1 targeted proteins in late mitosis/early G1"/>
</dbReference>
<dbReference type="Reactome" id="R-MMU-174184">
    <property type="pathway name" value="Cdc20:Phospho-APC/C mediated degradation of Cyclin A"/>
</dbReference>
<dbReference type="Reactome" id="R-MMU-187577">
    <property type="pathway name" value="SCF(Skp2)-mediated degradation of p27/p21"/>
</dbReference>
<dbReference type="Reactome" id="R-MMU-195253">
    <property type="pathway name" value="Degradation of beta-catenin by the destruction complex"/>
</dbReference>
<dbReference type="Reactome" id="R-MMU-202424">
    <property type="pathway name" value="Downstream TCR signaling"/>
</dbReference>
<dbReference type="Reactome" id="R-MMU-2467813">
    <property type="pathway name" value="Separation of Sister Chromatids"/>
</dbReference>
<dbReference type="Reactome" id="R-MMU-2871837">
    <property type="pathway name" value="FCERI mediated NF-kB activation"/>
</dbReference>
<dbReference type="Reactome" id="R-MMU-349425">
    <property type="pathway name" value="Autodegradation of the E3 ubiquitin ligase COP1"/>
</dbReference>
<dbReference type="Reactome" id="R-MMU-350562">
    <property type="pathway name" value="Regulation of ornithine decarboxylase (ODC)"/>
</dbReference>
<dbReference type="Reactome" id="R-MMU-382556">
    <property type="pathway name" value="ABC-family proteins mediated transport"/>
</dbReference>
<dbReference type="Reactome" id="R-MMU-450408">
    <property type="pathway name" value="AUF1 (hnRNP D0) binds and destabilizes mRNA"/>
</dbReference>
<dbReference type="Reactome" id="R-MMU-4608870">
    <property type="pathway name" value="Asymmetric localization of PCP proteins"/>
</dbReference>
<dbReference type="Reactome" id="R-MMU-4641257">
    <property type="pathway name" value="Degradation of AXIN"/>
</dbReference>
<dbReference type="Reactome" id="R-MMU-4641258">
    <property type="pathway name" value="Degradation of DVL"/>
</dbReference>
<dbReference type="Reactome" id="R-MMU-5358346">
    <property type="pathway name" value="Hedgehog ligand biogenesis"/>
</dbReference>
<dbReference type="Reactome" id="R-MMU-5607761">
    <property type="pathway name" value="Dectin-1 mediated noncanonical NF-kB signaling"/>
</dbReference>
<dbReference type="Reactome" id="R-MMU-5607764">
    <property type="pathway name" value="CLEC7A (Dectin-1) signaling"/>
</dbReference>
<dbReference type="Reactome" id="R-MMU-5610780">
    <property type="pathway name" value="Degradation of GLI1 by the proteasome"/>
</dbReference>
<dbReference type="Reactome" id="R-MMU-5610785">
    <property type="pathway name" value="GLI3 is processed to GLI3R by the proteasome"/>
</dbReference>
<dbReference type="Reactome" id="R-MMU-5632684">
    <property type="pathway name" value="Hedgehog 'on' state"/>
</dbReference>
<dbReference type="Reactome" id="R-MMU-5658442">
    <property type="pathway name" value="Regulation of RAS by GAPs"/>
</dbReference>
<dbReference type="Reactome" id="R-MMU-5668541">
    <property type="pathway name" value="TNFR2 non-canonical NF-kB pathway"/>
</dbReference>
<dbReference type="Reactome" id="R-MMU-5676590">
    <property type="pathway name" value="NIK--&gt;noncanonical NF-kB signaling"/>
</dbReference>
<dbReference type="Reactome" id="R-MMU-5687128">
    <property type="pathway name" value="MAPK6/MAPK4 signaling"/>
</dbReference>
<dbReference type="Reactome" id="R-MMU-5689603">
    <property type="pathway name" value="UCH proteinases"/>
</dbReference>
<dbReference type="Reactome" id="R-MMU-5689880">
    <property type="pathway name" value="Ub-specific processing proteases"/>
</dbReference>
<dbReference type="Reactome" id="R-MMU-68867">
    <property type="pathway name" value="Assembly of the pre-replicative complex"/>
</dbReference>
<dbReference type="Reactome" id="R-MMU-68949">
    <property type="pathway name" value="Orc1 removal from chromatin"/>
</dbReference>
<dbReference type="Reactome" id="R-MMU-69017">
    <property type="pathway name" value="CDK-mediated phosphorylation and removal of Cdc6"/>
</dbReference>
<dbReference type="Reactome" id="R-MMU-69481">
    <property type="pathway name" value="G2/M Checkpoints"/>
</dbReference>
<dbReference type="Reactome" id="R-MMU-69601">
    <property type="pathway name" value="Ubiquitin Mediated Degradation of Phosphorylated Cdc25A"/>
</dbReference>
<dbReference type="Reactome" id="R-MMU-75815">
    <property type="pathway name" value="Ubiquitin-dependent degradation of Cyclin D"/>
</dbReference>
<dbReference type="Reactome" id="R-MMU-8852276">
    <property type="pathway name" value="The role of GTSE1 in G2/M progression after G2 checkpoint"/>
</dbReference>
<dbReference type="Reactome" id="R-MMU-8854050">
    <property type="pathway name" value="FBXL7 down-regulates AURKA during mitotic entry and in early mitosis"/>
</dbReference>
<dbReference type="Reactome" id="R-MMU-8939236">
    <property type="pathway name" value="RUNX1 regulates transcription of genes involved in differentiation of HSCs"/>
</dbReference>
<dbReference type="Reactome" id="R-MMU-8939902">
    <property type="pathway name" value="Regulation of RUNX2 expression and activity"/>
</dbReference>
<dbReference type="Reactome" id="R-MMU-8941858">
    <property type="pathway name" value="Regulation of RUNX3 expression and activity"/>
</dbReference>
<dbReference type="Reactome" id="R-MMU-8948751">
    <property type="pathway name" value="Regulation of PTEN stability and activity"/>
</dbReference>
<dbReference type="Reactome" id="R-MMU-8951664">
    <property type="pathway name" value="Neddylation"/>
</dbReference>
<dbReference type="Reactome" id="R-MMU-9020702">
    <property type="pathway name" value="Interleukin-1 signaling"/>
</dbReference>
<dbReference type="Reactome" id="R-MMU-9755511">
    <property type="pathway name" value="KEAP1-NFE2L2 pathway"/>
</dbReference>
<dbReference type="Reactome" id="R-MMU-9762114">
    <property type="pathway name" value="GSK3B and BTRC:CUL1-mediated-degradation of NFE2L2"/>
</dbReference>
<dbReference type="Reactome" id="R-MMU-983168">
    <property type="pathway name" value="Antigen processing: Ubiquitination &amp; Proteasome degradation"/>
</dbReference>
<dbReference type="Reactome" id="R-MMU-9907900">
    <property type="pathway name" value="Proteasome assembly"/>
</dbReference>
<dbReference type="BioGRID-ORCS" id="26445">
    <property type="hits" value="27 hits in 77 CRISPR screens"/>
</dbReference>
<dbReference type="ChiTaRS" id="Psmb2">
    <property type="organism name" value="mouse"/>
</dbReference>
<dbReference type="EvolutionaryTrace" id="Q9R1P3"/>
<dbReference type="PRO" id="PR:Q9R1P3"/>
<dbReference type="Proteomes" id="UP000000589">
    <property type="component" value="Chromosome 4"/>
</dbReference>
<dbReference type="RNAct" id="Q9R1P3">
    <property type="molecule type" value="protein"/>
</dbReference>
<dbReference type="Bgee" id="ENSMUSG00000028837">
    <property type="expression patterns" value="Expressed in embryonic cell in blastocyst and 265 other cell types or tissues"/>
</dbReference>
<dbReference type="GO" id="GO:0005829">
    <property type="term" value="C:cytosol"/>
    <property type="evidence" value="ECO:0000304"/>
    <property type="project" value="Reactome"/>
</dbReference>
<dbReference type="GO" id="GO:0005654">
    <property type="term" value="C:nucleoplasm"/>
    <property type="evidence" value="ECO:0000304"/>
    <property type="project" value="Reactome"/>
</dbReference>
<dbReference type="GO" id="GO:0005839">
    <property type="term" value="C:proteasome core complex"/>
    <property type="evidence" value="ECO:0000314"/>
    <property type="project" value="UniProtKB"/>
</dbReference>
<dbReference type="GO" id="GO:0019774">
    <property type="term" value="C:proteasome core complex, beta-subunit complex"/>
    <property type="evidence" value="ECO:0000250"/>
    <property type="project" value="UniProtKB"/>
</dbReference>
<dbReference type="GO" id="GO:0010498">
    <property type="term" value="P:proteasomal protein catabolic process"/>
    <property type="evidence" value="ECO:0007669"/>
    <property type="project" value="InterPro"/>
</dbReference>
<dbReference type="CDD" id="cd03758">
    <property type="entry name" value="proteasome_beta_type_2"/>
    <property type="match status" value="1"/>
</dbReference>
<dbReference type="FunFam" id="3.60.20.10:FF:000008">
    <property type="entry name" value="Proteasome subunit beta type-4"/>
    <property type="match status" value="1"/>
</dbReference>
<dbReference type="Gene3D" id="3.60.20.10">
    <property type="entry name" value="Glutamine Phosphoribosylpyrophosphate, subunit 1, domain 1"/>
    <property type="match status" value="1"/>
</dbReference>
<dbReference type="InterPro" id="IPR029055">
    <property type="entry name" value="Ntn_hydrolases_N"/>
</dbReference>
<dbReference type="InterPro" id="IPR035206">
    <property type="entry name" value="Proteasome_beta2"/>
</dbReference>
<dbReference type="InterPro" id="IPR016050">
    <property type="entry name" value="Proteasome_bsu_CS"/>
</dbReference>
<dbReference type="InterPro" id="IPR001353">
    <property type="entry name" value="Proteasome_sua/b"/>
</dbReference>
<dbReference type="InterPro" id="IPR023333">
    <property type="entry name" value="Proteasome_suB-type"/>
</dbReference>
<dbReference type="PANTHER" id="PTHR32194">
    <property type="entry name" value="METALLOPROTEASE TLDD"/>
    <property type="match status" value="1"/>
</dbReference>
<dbReference type="PANTHER" id="PTHR32194:SF2">
    <property type="entry name" value="PROTEASOME SUBUNIT BETA TYPE-1"/>
    <property type="match status" value="1"/>
</dbReference>
<dbReference type="Pfam" id="PF00227">
    <property type="entry name" value="Proteasome"/>
    <property type="match status" value="1"/>
</dbReference>
<dbReference type="SUPFAM" id="SSF56235">
    <property type="entry name" value="N-terminal nucleophile aminohydrolases (Ntn hydrolases)"/>
    <property type="match status" value="1"/>
</dbReference>
<dbReference type="PROSITE" id="PS00854">
    <property type="entry name" value="PROTEASOME_BETA_1"/>
    <property type="match status" value="1"/>
</dbReference>
<dbReference type="PROSITE" id="PS51476">
    <property type="entry name" value="PROTEASOME_BETA_2"/>
    <property type="match status" value="1"/>
</dbReference>
<evidence type="ECO:0000250" key="1">
    <source>
        <dbReference type="UniProtKB" id="P49721"/>
    </source>
</evidence>
<evidence type="ECO:0000255" key="2">
    <source>
        <dbReference type="PROSITE-ProRule" id="PRU00809"/>
    </source>
</evidence>
<evidence type="ECO:0000269" key="3">
    <source>
    </source>
</evidence>
<evidence type="ECO:0000269" key="4">
    <source>
    </source>
</evidence>
<evidence type="ECO:0000269" key="5">
    <source>
    </source>
</evidence>
<evidence type="ECO:0007829" key="6">
    <source>
        <dbReference type="PDB" id="3UNB"/>
    </source>
</evidence>
<sequence length="201" mass="22906">MEYLIGIQGPDYVLVASDRVAASNIVQMKDDHDKMFKMSEKILLLCVGEAGDTVQFAEYIQKNVQLYKMRNGYELSPTAAANFTRRNLADCLRSRTPYHVNLLLAGYDEHEGPALYYMDYLAALAKAPFAAHGYGAFLTLSILDRYYTPTISRERAVELLRKCLEELQKRFILNLPTFSVRVIDKDGIHNLENIAFPKRDS</sequence>
<feature type="chain" id="PRO_0000148044" description="Proteasome subunit beta type-2">
    <location>
        <begin position="1"/>
        <end position="201"/>
    </location>
</feature>
<feature type="modified residue" description="N-acetylmethionine" evidence="1">
    <location>
        <position position="1"/>
    </location>
</feature>
<feature type="strand" evidence="6">
    <location>
        <begin position="4"/>
        <end position="8"/>
    </location>
</feature>
<feature type="strand" evidence="6">
    <location>
        <begin position="13"/>
        <end position="18"/>
    </location>
</feature>
<feature type="strand" evidence="6">
    <location>
        <begin position="21"/>
        <end position="23"/>
    </location>
</feature>
<feature type="strand" evidence="6">
    <location>
        <begin position="26"/>
        <end position="31"/>
    </location>
</feature>
<feature type="strand" evidence="6">
    <location>
        <begin position="35"/>
        <end position="37"/>
    </location>
</feature>
<feature type="strand" evidence="6">
    <location>
        <begin position="39"/>
        <end position="49"/>
    </location>
</feature>
<feature type="helix" evidence="6">
    <location>
        <begin position="52"/>
        <end position="71"/>
    </location>
</feature>
<feature type="helix" evidence="6">
    <location>
        <begin position="77"/>
        <end position="92"/>
    </location>
</feature>
<feature type="strand" evidence="6">
    <location>
        <begin position="94"/>
        <end position="96"/>
    </location>
</feature>
<feature type="strand" evidence="6">
    <location>
        <begin position="100"/>
        <end position="108"/>
    </location>
</feature>
<feature type="turn" evidence="6">
    <location>
        <begin position="109"/>
        <end position="111"/>
    </location>
</feature>
<feature type="strand" evidence="6">
    <location>
        <begin position="112"/>
        <end position="118"/>
    </location>
</feature>
<feature type="strand" evidence="6">
    <location>
        <begin position="124"/>
        <end position="126"/>
    </location>
</feature>
<feature type="strand" evidence="6">
    <location>
        <begin position="128"/>
        <end position="133"/>
    </location>
</feature>
<feature type="helix" evidence="6">
    <location>
        <begin position="136"/>
        <end position="145"/>
    </location>
</feature>
<feature type="helix" evidence="6">
    <location>
        <begin position="153"/>
        <end position="169"/>
    </location>
</feature>
<feature type="strand" evidence="6">
    <location>
        <begin position="171"/>
        <end position="173"/>
    </location>
</feature>
<feature type="strand" evidence="6">
    <location>
        <begin position="178"/>
        <end position="184"/>
    </location>
</feature>
<feature type="strand" evidence="6">
    <location>
        <begin position="187"/>
        <end position="190"/>
    </location>
</feature>
<proteinExistence type="evidence at protein level"/>
<reference key="1">
    <citation type="journal article" date="1999" name="Immunogenetics">
        <title>The complete primary structure of mouse 20S proteasomes.</title>
        <authorList>
            <person name="Elenich L.A."/>
            <person name="Nandi D."/>
            <person name="Kent E.A."/>
            <person name="McCluskey T.S."/>
            <person name="Cruz M."/>
            <person name="Iyer M.N."/>
            <person name="Woodward E.C."/>
            <person name="Conn C.W."/>
            <person name="Ochoa A.L."/>
            <person name="Ginsburg D.B."/>
            <person name="Monaco J.J."/>
        </authorList>
    </citation>
    <scope>NUCLEOTIDE SEQUENCE [MRNA]</scope>
    <source>
        <strain>B10.BR</strain>
    </source>
</reference>
<reference key="2">
    <citation type="journal article" date="2004" name="Genome Res.">
        <title>The status, quality, and expansion of the NIH full-length cDNA project: the Mammalian Gene Collection (MGC).</title>
        <authorList>
            <consortium name="The MGC Project Team"/>
        </authorList>
    </citation>
    <scope>NUCLEOTIDE SEQUENCE [LARGE SCALE MRNA]</scope>
    <source>
        <strain>C57BL/6J</strain>
        <tissue>Mammary gland</tissue>
    </source>
</reference>
<reference key="3">
    <citation type="submission" date="2007-04" db="UniProtKB">
        <authorList>
            <person name="Lubec G."/>
            <person name="Klug S."/>
            <person name="Kang S.U."/>
        </authorList>
    </citation>
    <scope>PROTEIN SEQUENCE OF 71-85; 127-145 AND 171-198</scope>
    <scope>IDENTIFICATION BY MASS SPECTROMETRY</scope>
    <source>
        <strain>C57BL/6J</strain>
        <tissue>Brain</tissue>
        <tissue>Hippocampus</tissue>
    </source>
</reference>
<reference key="4">
    <citation type="journal article" date="2006" name="Circ. Res.">
        <title>Mapping the murine cardiac 26S proteasome complexes.</title>
        <authorList>
            <person name="Gomes A.V."/>
            <person name="Zong C."/>
            <person name="Edmondson R.D."/>
            <person name="Li X."/>
            <person name="Stefani E."/>
            <person name="Zhang J."/>
            <person name="Jones R.C."/>
            <person name="Thyparambil S."/>
            <person name="Wang G.W."/>
            <person name="Qiao X."/>
            <person name="Bardag-Gorce F."/>
            <person name="Ping P."/>
        </authorList>
    </citation>
    <scope>IDENTIFICATION IN THE 20S PROTEASOME CORE COMPLEX</scope>
</reference>
<reference key="5">
    <citation type="journal article" date="2006" name="Mol. Cell. Biol.">
        <title>Proteasome activator PA200 is required for normal spermatogenesis.</title>
        <authorList>
            <person name="Khor B."/>
            <person name="Bredemeyer A.L."/>
            <person name="Huang C.-Y."/>
            <person name="Turnbull I.R."/>
            <person name="Evans R."/>
            <person name="Maggi L.B. Jr."/>
            <person name="White J.M."/>
            <person name="Walker L.M."/>
            <person name="Carnes K."/>
            <person name="Hess R.A."/>
            <person name="Sleckman B.P."/>
        </authorList>
    </citation>
    <scope>FUNCTION</scope>
</reference>
<reference key="6">
    <citation type="journal article" date="2010" name="Cell">
        <title>A tissue-specific atlas of mouse protein phosphorylation and expression.</title>
        <authorList>
            <person name="Huttlin E.L."/>
            <person name="Jedrychowski M.P."/>
            <person name="Elias J.E."/>
            <person name="Goswami T."/>
            <person name="Rad R."/>
            <person name="Beausoleil S.A."/>
            <person name="Villen J."/>
            <person name="Haas W."/>
            <person name="Sowa M.E."/>
            <person name="Gygi S.P."/>
        </authorList>
    </citation>
    <scope>IDENTIFICATION BY MASS SPECTROMETRY [LARGE SCALE ANALYSIS]</scope>
    <source>
        <tissue>Brain</tissue>
        <tissue>Brown adipose tissue</tissue>
        <tissue>Heart</tissue>
        <tissue>Kidney</tissue>
        <tissue>Liver</tissue>
        <tissue>Lung</tissue>
        <tissue>Pancreas</tissue>
        <tissue>Spleen</tissue>
        <tissue>Testis</tissue>
    </source>
</reference>
<reference key="7">
    <citation type="journal article" date="2012" name="Cell">
        <title>Immuno- and constitutive proteasome crystal structures reveal differences in substrate and inhibitor specificity.</title>
        <authorList>
            <person name="Huber E.M."/>
            <person name="Basler M."/>
            <person name="Schwab R."/>
            <person name="Heinemeyer W."/>
            <person name="Kirk C.J."/>
            <person name="Groettrup M."/>
            <person name="Groll M."/>
        </authorList>
    </citation>
    <scope>X-RAY CRYSTALLOGRAPHY (2.90 ANGSTROMS) OF 20S IMMUNOPROTEASOME</scope>
    <scope>SUBUNIT</scope>
    <scope>FUNCTION</scope>
    <scope>TISSUE SPECIFICITY</scope>
</reference>
<organism>
    <name type="scientific">Mus musculus</name>
    <name type="common">Mouse</name>
    <dbReference type="NCBI Taxonomy" id="10090"/>
    <lineage>
        <taxon>Eukaryota</taxon>
        <taxon>Metazoa</taxon>
        <taxon>Chordata</taxon>
        <taxon>Craniata</taxon>
        <taxon>Vertebrata</taxon>
        <taxon>Euteleostomi</taxon>
        <taxon>Mammalia</taxon>
        <taxon>Eutheria</taxon>
        <taxon>Euarchontoglires</taxon>
        <taxon>Glires</taxon>
        <taxon>Rodentia</taxon>
        <taxon>Myomorpha</taxon>
        <taxon>Muroidea</taxon>
        <taxon>Muridae</taxon>
        <taxon>Murinae</taxon>
        <taxon>Mus</taxon>
        <taxon>Mus</taxon>
    </lineage>
</organism>
<name>PSB2_MOUSE</name>
<comment type="function">
    <text evidence="3 5">Non-catalytic component of the 20S core proteasome complex involved in the proteolytic degradation of most intracellular proteins. This complex plays numerous essential roles within the cell by associating with different regulatory particles. Associated with two 19S regulatory particles, forms the 26S proteasome and thus participates in the ATP-dependent degradation of ubiquitinated proteins. The 26S proteasome plays a key role in the maintenance of protein homeostasis by removing misfolded or damaged proteins that could impair cellular functions, and by removing proteins whose functions are no longer required. Associated with the PA200 or PA28, the 20S proteasome mediates ubiquitin-independent protein degradation. This type of proteolysis is required in several pathways including spermatogenesis (20S-PA200 complex) or generation of a subset of MHC class I-presented antigenic peptides (20S-PA28 complex).</text>
</comment>
<comment type="subunit">
    <text evidence="4 5">The 26S proteasome consists of a 20S proteasome core and two 19S regulatory subunits. The 20S proteasome core is a barrel-shaped complex made of 28 subunits that are arranged in four stacked rings. The two outer rings are each formed by seven alpha subunits, and the two inner rings are formed by seven beta subunits. The proteolytic activity is exerted by three beta-subunits PSMB5, PSMB6 and PSMB7.</text>
</comment>
<comment type="subcellular location">
    <subcellularLocation>
        <location evidence="1">Cytoplasm</location>
    </subcellularLocation>
    <subcellularLocation>
        <location evidence="1">Nucleus</location>
    </subcellularLocation>
    <text evidence="1">Translocated from the cytoplasm into the nucleus following interaction with AKIRIN2, which bridges the proteasome with the nuclear import receptor IPO9.</text>
</comment>
<comment type="tissue specificity">
    <text evidence="5">Detected in liver (at protein level).</text>
</comment>
<comment type="similarity">
    <text evidence="2">Belongs to the peptidase T1B family.</text>
</comment>